<feature type="chain" id="PRO_0000222822" description="Nucleoprotein">
    <location>
        <begin position="1"/>
        <end position="422"/>
    </location>
</feature>
<feature type="region of interest" description="Interaction with the phosphoprotein" evidence="1">
    <location>
        <begin position="350"/>
        <end position="390"/>
    </location>
</feature>
<feature type="mutagenesis site" description="Complete loss of leader encapsidation." evidence="2">
    <original>VEF</original>
    <variation>AAA</variation>
    <location>
        <begin position="418"/>
        <end position="420"/>
    </location>
</feature>
<feature type="mutagenesis site" description="Complete loss of leader encapsidation." evidence="2">
    <original>DK</original>
    <variation>AA</variation>
    <location>
        <begin position="421"/>
        <end position="422"/>
    </location>
</feature>
<feature type="mutagenesis site" description="No effect on leader encapsidation.">
    <original>K</original>
    <variation>A</variation>
    <variation>R</variation>
    <location>
        <position position="422"/>
    </location>
</feature>
<feature type="mutagenesis site" description="Complete loss of leader encapsidation.">
    <original>K</original>
    <variation>D</variation>
    <variation>I</variation>
    <location>
        <position position="422"/>
    </location>
</feature>
<accession>P04881</accession>
<name>NCAP_VSNJO</name>
<reference key="1">
    <citation type="journal article" date="1984" name="Virology">
        <title>Complete nucleotide sequence of the mRNA coding for the N protein of vesicular stomatitis virus (New Jersey serotype).</title>
        <authorList>
            <person name="Banerjee A.K."/>
            <person name="Rhodes D.P."/>
            <person name="Gill D.S."/>
        </authorList>
    </citation>
    <scope>NUCLEOTIDE SEQUENCE [MRNA]</scope>
</reference>
<reference key="2">
    <citation type="journal article" date="1999" name="Virology">
        <title>Carboxy-terminal five amino acids of the nucleocapsid protein of vesicular stomatitis virus are required for encapsidation and replication of genome RNA.</title>
        <authorList>
            <person name="Das T."/>
            <person name="Chakrabarti B.K."/>
            <person name="Chattopadhyay D."/>
            <person name="Banerjee A.K."/>
        </authorList>
    </citation>
    <scope>MUTAGENESIS OF 418-VAL--PHE-420 AND 421-ASP-LYS-422</scope>
</reference>
<reference key="3">
    <citation type="journal article" date="2006" name="J. Virol.">
        <title>Visualization of intracellular transport of vesicular stomatitis virus nucleocapsids in living cells.</title>
        <authorList>
            <person name="Das S.C."/>
            <person name="Nayak D."/>
            <person name="Zhou Y."/>
            <person name="Pattnaik A.K."/>
        </authorList>
    </citation>
    <scope>FUNCTION</scope>
</reference>
<sequence>MAPTVKRIINDSIIQPKLPANEDPVEYPADYFKNNTNIVLYVSTKVALNDLRAYVYQGIKSGNPSILHINAYLYAALKGVEGTLDRDWVSFGRTIGKREENVKIFDLVKVEELKTALPDGKSDPDRSAEDDKWLPIYILGLYRVGRSKVTDYRKKLLDGLENQCRVASTRFESLVEDGLDFFDIWENDPNFTKIVAAVDMFFHMFKKHERAPIRYGTIVSRFKDCAALATFGHLSKVSGLSIEDLTTWVLNREVADELCQMMYPGQEIDKADSYMPYMIDFGLSQKSPYSSVKNPAFHFWGQLAALLLRSTRAKNARQPDDIEYTSLTCASLLLSFAVGSSADIEQQFYIGEDKYTTEKDDSLKKSDVPPKGRNVVDWLGWYDDNGGKPTPDMLNFARRAVSSLQSLREKTIGKYAKVEFDK</sequence>
<gene>
    <name type="primary">N</name>
</gene>
<organismHost>
    <name type="scientific">Aedes</name>
    <dbReference type="NCBI Taxonomy" id="7158"/>
</organismHost>
<organismHost>
    <name type="scientific">Bos taurus</name>
    <name type="common">Bovine</name>
    <dbReference type="NCBI Taxonomy" id="9913"/>
</organismHost>
<organismHost>
    <name type="scientific">Culicoides</name>
    <dbReference type="NCBI Taxonomy" id="58271"/>
</organismHost>
<organismHost>
    <name type="scientific">Equus asinus</name>
    <name type="common">Donkey</name>
    <name type="synonym">Equus africanus asinus</name>
    <dbReference type="NCBI Taxonomy" id="9793"/>
</organismHost>
<organismHost>
    <name type="scientific">Equus caballus</name>
    <name type="common">Horse</name>
    <dbReference type="NCBI Taxonomy" id="9796"/>
</organismHost>
<organismHost>
    <name type="scientific">Homo sapiens</name>
    <name type="common">Human</name>
    <dbReference type="NCBI Taxonomy" id="9606"/>
</organismHost>
<organismHost>
    <name type="scientific">Lutzomyia</name>
    <dbReference type="NCBI Taxonomy" id="252607"/>
</organismHost>
<organismHost>
    <name type="scientific">Musca domestica</name>
    <name type="common">House fly</name>
    <dbReference type="NCBI Taxonomy" id="7370"/>
</organismHost>
<organismHost>
    <name type="scientific">Simuliidae</name>
    <name type="common">black flies</name>
    <dbReference type="NCBI Taxonomy" id="7190"/>
</organismHost>
<organismHost>
    <name type="scientific">Sus scrofa</name>
    <name type="common">Pig</name>
    <dbReference type="NCBI Taxonomy" id="9823"/>
</organismHost>
<proteinExistence type="evidence at protein level"/>
<protein>
    <recommendedName>
        <fullName>Nucleoprotein</fullName>
        <shortName>NP</shortName>
    </recommendedName>
    <alternativeName>
        <fullName>Nucleocapsid protein</fullName>
        <shortName>Protein N</shortName>
    </alternativeName>
</protein>
<dbReference type="EMBL" id="K02379">
    <property type="protein sequence ID" value="AAA48449.1"/>
    <property type="molecule type" value="mRNA"/>
</dbReference>
<dbReference type="SMR" id="P04881"/>
<dbReference type="Proteomes" id="UP000007626">
    <property type="component" value="Genome"/>
</dbReference>
<dbReference type="GO" id="GO:0019029">
    <property type="term" value="C:helical viral capsid"/>
    <property type="evidence" value="ECO:0007669"/>
    <property type="project" value="UniProtKB-KW"/>
</dbReference>
<dbReference type="GO" id="GO:0030430">
    <property type="term" value="C:host cell cytoplasm"/>
    <property type="evidence" value="ECO:0007669"/>
    <property type="project" value="UniProtKB-SubCell"/>
</dbReference>
<dbReference type="GO" id="GO:1990904">
    <property type="term" value="C:ribonucleoprotein complex"/>
    <property type="evidence" value="ECO:0007669"/>
    <property type="project" value="UniProtKB-KW"/>
</dbReference>
<dbReference type="GO" id="GO:0019013">
    <property type="term" value="C:viral nucleocapsid"/>
    <property type="evidence" value="ECO:0007669"/>
    <property type="project" value="UniProtKB-KW"/>
</dbReference>
<dbReference type="GO" id="GO:0003723">
    <property type="term" value="F:RNA binding"/>
    <property type="evidence" value="ECO:0007669"/>
    <property type="project" value="UniProtKB-KW"/>
</dbReference>
<dbReference type="Gene3D" id="1.10.3610.10">
    <property type="entry name" value="Nucleoprotein"/>
    <property type="match status" value="1"/>
</dbReference>
<dbReference type="Gene3D" id="1.10.3570.10">
    <property type="entry name" value="Rhabdovirus nucleocapsid protein like domain"/>
    <property type="match status" value="1"/>
</dbReference>
<dbReference type="InterPro" id="IPR000448">
    <property type="entry name" value="Rhabdo_ncapsid"/>
</dbReference>
<dbReference type="InterPro" id="IPR023331">
    <property type="entry name" value="Rhabdovirus_ncapsid_C"/>
</dbReference>
<dbReference type="InterPro" id="IPR023330">
    <property type="entry name" value="Rhabdovirus_ncapsid_N"/>
</dbReference>
<dbReference type="InterPro" id="IPR035961">
    <property type="entry name" value="Rhabdovirus_nucleoprotein-like"/>
</dbReference>
<dbReference type="Pfam" id="PF00945">
    <property type="entry name" value="Rhabdo_ncap"/>
    <property type="match status" value="1"/>
</dbReference>
<dbReference type="SUPFAM" id="SSF140809">
    <property type="entry name" value="Rhabdovirus nucleoprotein-like"/>
    <property type="match status" value="1"/>
</dbReference>
<comment type="function">
    <text evidence="1">Encapsidates the genome in a ratio of one N per nine ribonucleotides, protecting it from nucleases. The encapsidated genomic RNA is termed the NC and serves as template for transcription and replication. The nucleocapsid is bullet-shaped with the tip containing 8 turns of a conical spiral before reaching the helical cylindrical trunk. Nucleocapsid assembly is concomitant with replication, therefore viral replication depends on the intracellular concentration of free N, termed N(0). All replicative products are resistant to nucleases.</text>
</comment>
<comment type="subunit">
    <text evidence="1">Homomultimerizes to form the nucleocapsid. Binds to viral genomic RNA; this interaction contributes to the virion assembly. N in the nucleocapsid interacts (via C-terminus) with the P protein (via C-terminus); this interaction allows to package the L polymerase in the virion and positions the polymerase on the template, since P acts as a bridge between N and L. N(0) interacts with the P protein; this interaction prevents the uncontrolled aggregation of N(0). Interacts with the matrix protein (inner layer); this interaction contributes to the virion assembly. Interacts with the L polymerase.</text>
</comment>
<comment type="subcellular location">
    <subcellularLocation>
        <location evidence="1">Virion</location>
    </subcellularLocation>
    <subcellularLocation>
        <location evidence="1">Host cytoplasm</location>
    </subcellularLocation>
    <text evidence="1">The nucleocapsid is synthesized in the cytoplasm, and is subsequently transported via microtubules to the cell periphery. About 1240 copies of N are present in the virion.</text>
</comment>
<comment type="similarity">
    <text evidence="3">Belongs to the vesiculovirus nucleocapsid protein family.</text>
</comment>
<evidence type="ECO:0000250" key="1">
    <source>
        <dbReference type="UniProtKB" id="P03521"/>
    </source>
</evidence>
<evidence type="ECO:0000269" key="2">
    <source>
    </source>
</evidence>
<evidence type="ECO:0000305" key="3"/>
<organism>
    <name type="scientific">Vesicular stomatitis New Jersey virus (strain Ogden subtype Concan)</name>
    <name type="common">VSNJV</name>
    <dbReference type="NCBI Taxonomy" id="11283"/>
    <lineage>
        <taxon>Viruses</taxon>
        <taxon>Riboviria</taxon>
        <taxon>Orthornavirae</taxon>
        <taxon>Negarnaviricota</taxon>
        <taxon>Haploviricotina</taxon>
        <taxon>Monjiviricetes</taxon>
        <taxon>Mononegavirales</taxon>
        <taxon>Rhabdoviridae</taxon>
        <taxon>Alpharhabdovirinae</taxon>
        <taxon>Vesiculovirus</taxon>
        <taxon>Vesiculovirus newjersey</taxon>
    </lineage>
</organism>
<keyword id="KW-0167">Capsid protein</keyword>
<keyword id="KW-1139">Helical capsid protein</keyword>
<keyword id="KW-1035">Host cytoplasm</keyword>
<keyword id="KW-1185">Reference proteome</keyword>
<keyword id="KW-0687">Ribonucleoprotein</keyword>
<keyword id="KW-0694">RNA-binding</keyword>
<keyword id="KW-0543">Viral nucleoprotein</keyword>
<keyword id="KW-0946">Virion</keyword>